<protein>
    <recommendedName>
        <fullName>Hyaluronidase CdtHya1</fullName>
        <shortName evidence="2">Hya</shortName>
        <ecNumber evidence="2">3.2.1.35</ecNumber>
    </recommendedName>
    <alternativeName>
        <fullName evidence="2">Hyaluronoglucosaminidase</fullName>
    </alternativeName>
    <alternativeName>
        <fullName>Venom spreading factor</fullName>
    </alternativeName>
</protein>
<name>HYAL_CRODU</name>
<proteinExistence type="evidence at protein level"/>
<accession>B3EWP2</accession>
<reference evidence="7" key="1">
    <citation type="thesis" date="2012" institute="University of Sao Paulo" country="Brazil">
        <title>Functional and structural characterization of hyaluronidase isolated from Crotalus durissus terrificus snake venom.</title>
        <authorList>
            <person name="Bordon K.C.F."/>
        </authorList>
    </citation>
    <scope>PROTEIN SEQUENCE</scope>
    <scope>FUNCTION</scope>
    <scope>BIOPHYSICOCHEMICAL PROPERTIES</scope>
    <scope>SUBUNIT</scope>
    <scope>SUBCELLULAR LOCATION</scope>
    <scope>GLYCOSYLATION</scope>
    <scope>DISULFIDE BONDS</scope>
    <source>
        <tissue evidence="5">Venom</tissue>
    </source>
</reference>
<reference key="2">
    <citation type="journal article" date="2012" name="Biochimie">
        <title>Isolation, enzymatic characterization and antiedematogenic activity of the first reported rattlesnake hyaluronidase from Crotalus durissus terrificus venom.</title>
        <authorList>
            <person name="Bordon K.C.F."/>
            <person name="Perino M.G."/>
            <person name="Giglio J.R."/>
            <person name="Arantes E.C."/>
        </authorList>
    </citation>
    <scope>PROTEIN SEQUENCE</scope>
    <scope>FUNCTION</scope>
    <scope>BIOPHYSICOCHEMICAL PROPERTIES</scope>
    <scope>SUBUNIT</scope>
    <scope>SUBCELLULAR LOCATION</scope>
    <scope>GLYCOSYLATION</scope>
    <scope>DISULFIDE BONDS</scope>
    <source>
        <tissue>Venom</tissue>
    </source>
</reference>
<keyword id="KW-0903">Direct protein sequencing</keyword>
<keyword id="KW-1015">Disulfide bond</keyword>
<keyword id="KW-0325">Glycoprotein</keyword>
<keyword id="KW-0326">Glycosidase</keyword>
<keyword id="KW-0378">Hydrolase</keyword>
<keyword id="KW-0964">Secreted</keyword>
<sequence>MQAKAPMYPNEPFLVFWNAPTTQCRLRYKVDLDLNTFHIVTNAR</sequence>
<organism>
    <name type="scientific">Crotalus durissus terrificus</name>
    <name type="common">South American rattlesnake</name>
    <dbReference type="NCBI Taxonomy" id="8732"/>
    <lineage>
        <taxon>Eukaryota</taxon>
        <taxon>Metazoa</taxon>
        <taxon>Chordata</taxon>
        <taxon>Craniata</taxon>
        <taxon>Vertebrata</taxon>
        <taxon>Euteleostomi</taxon>
        <taxon>Lepidosauria</taxon>
        <taxon>Squamata</taxon>
        <taxon>Bifurcata</taxon>
        <taxon>Unidentata</taxon>
        <taxon>Episquamata</taxon>
        <taxon>Toxicofera</taxon>
        <taxon>Serpentes</taxon>
        <taxon>Colubroidea</taxon>
        <taxon>Viperidae</taxon>
        <taxon>Crotalinae</taxon>
        <taxon>Crotalus</taxon>
    </lineage>
</organism>
<evidence type="ECO:0000250" key="1"/>
<evidence type="ECO:0000250" key="2">
    <source>
        <dbReference type="UniProtKB" id="P86274"/>
    </source>
</evidence>
<evidence type="ECO:0000255" key="3"/>
<evidence type="ECO:0000269" key="4">
    <source>
    </source>
</evidence>
<evidence type="ECO:0000269" key="5">
    <source ref="1"/>
</evidence>
<evidence type="ECO:0000303" key="6">
    <source ref="1"/>
</evidence>
<evidence type="ECO:0000305" key="7"/>
<dbReference type="EC" id="3.2.1.35" evidence="2"/>
<dbReference type="SMR" id="B3EWP2"/>
<dbReference type="BRENDA" id="3.2.1.35">
    <property type="organism ID" value="1711"/>
</dbReference>
<dbReference type="GO" id="GO:0031410">
    <property type="term" value="C:cytoplasmic vesicle"/>
    <property type="evidence" value="ECO:0007669"/>
    <property type="project" value="TreeGrafter"/>
</dbReference>
<dbReference type="GO" id="GO:0005576">
    <property type="term" value="C:extracellular region"/>
    <property type="evidence" value="ECO:0007669"/>
    <property type="project" value="UniProtKB-SubCell"/>
</dbReference>
<dbReference type="GO" id="GO:0004415">
    <property type="term" value="F:hyalurononglucosaminidase activity"/>
    <property type="evidence" value="ECO:0007669"/>
    <property type="project" value="UniProtKB-EC"/>
</dbReference>
<dbReference type="GO" id="GO:0005975">
    <property type="term" value="P:carbohydrate metabolic process"/>
    <property type="evidence" value="ECO:0007669"/>
    <property type="project" value="InterPro"/>
</dbReference>
<dbReference type="GO" id="GO:0030214">
    <property type="term" value="P:hyaluronan catabolic process"/>
    <property type="evidence" value="ECO:0007669"/>
    <property type="project" value="TreeGrafter"/>
</dbReference>
<dbReference type="Gene3D" id="3.20.20.70">
    <property type="entry name" value="Aldolase class I"/>
    <property type="match status" value="1"/>
</dbReference>
<dbReference type="InterPro" id="IPR013785">
    <property type="entry name" value="Aldolase_TIM"/>
</dbReference>
<dbReference type="InterPro" id="IPR017853">
    <property type="entry name" value="Glycoside_hydrolase_SF"/>
</dbReference>
<dbReference type="InterPro" id="IPR018155">
    <property type="entry name" value="Hyaluronidase"/>
</dbReference>
<dbReference type="PANTHER" id="PTHR11769">
    <property type="entry name" value="HYALURONIDASE"/>
    <property type="match status" value="1"/>
</dbReference>
<dbReference type="PANTHER" id="PTHR11769:SF9">
    <property type="entry name" value="HYALURONIDASE"/>
    <property type="match status" value="1"/>
</dbReference>
<dbReference type="Pfam" id="PF01630">
    <property type="entry name" value="Glyco_hydro_56"/>
    <property type="match status" value="1"/>
</dbReference>
<dbReference type="SUPFAM" id="SSF51445">
    <property type="entry name" value="(Trans)glycosidases"/>
    <property type="match status" value="1"/>
</dbReference>
<comment type="function">
    <text evidence="4 5">Snake venom endo-hyaluronidase that degrades hyaluronan to smaller oligosaccharide fragments. In venom, it is not toxic by itself, but increases the diffusion of other venom proteins such as crotoxin (a neurotoxic and myotoxic PLA2) by degrading the extracellular matrix. In addition, it displays antiedematogenic activity, since it significantly diminishes the oedematogenic activity of crotoxin (probably by direct substrate hydrolysis, since hyaluronan possesses strong water-binding capacity).</text>
</comment>
<comment type="catalytic activity">
    <reaction evidence="2">
        <text>Random hydrolysis of (1-&gt;4)-linkages between N-acetyl-beta-D-glucosamine and D-glucuronate residues in hyaluronate.</text>
        <dbReference type="EC" id="3.2.1.35"/>
    </reaction>
</comment>
<comment type="biophysicochemical properties">
    <phDependence>
        <text evidence="4 5">Optimum pH is 5.5.</text>
    </phDependence>
    <temperatureDependence>
        <text evidence="4 5">Optimum temperature is 37 degrees Celsius.</text>
    </temperatureDependence>
</comment>
<comment type="subunit">
    <text evidence="4 5">Monomer.</text>
</comment>
<comment type="subcellular location">
    <subcellularLocation>
        <location evidence="4 5">Secreted</location>
    </subcellularLocation>
</comment>
<comment type="tissue specificity">
    <text evidence="7">Expressed by the venom gland.</text>
</comment>
<comment type="PTM">
    <text>Contains disulfide bonds.</text>
</comment>
<comment type="PTM">
    <text evidence="4 5">Glycosylated.</text>
</comment>
<comment type="similarity">
    <text evidence="3">Belongs to the glycosyl hydrolase 56 family.</text>
</comment>
<feature type="chain" id="PRO_0000419017" description="Hyaluronidase CdtHya1">
    <location>
        <begin position="1"/>
        <end position="44" status="greater than"/>
    </location>
</feature>
<feature type="disulfide bond" evidence="1">
    <location>
        <begin position="24"/>
        <end status="unknown"/>
    </location>
</feature>
<feature type="non-terminal residue" evidence="6">
    <location>
        <position position="44"/>
    </location>
</feature>